<feature type="chain" id="PRO_0000347872" description="Alanine--tRNA ligase">
    <location>
        <begin position="1"/>
        <end position="738"/>
    </location>
</feature>
<feature type="binding site" evidence="2">
    <location>
        <position position="564"/>
    </location>
    <ligand>
        <name>Zn(2+)</name>
        <dbReference type="ChEBI" id="CHEBI:29105"/>
    </ligand>
</feature>
<feature type="binding site" evidence="2">
    <location>
        <position position="568"/>
    </location>
    <ligand>
        <name>Zn(2+)</name>
        <dbReference type="ChEBI" id="CHEBI:29105"/>
    </ligand>
</feature>
<feature type="binding site" evidence="2">
    <location>
        <position position="666"/>
    </location>
    <ligand>
        <name>Zn(2+)</name>
        <dbReference type="ChEBI" id="CHEBI:29105"/>
    </ligand>
</feature>
<feature type="binding site" evidence="2">
    <location>
        <position position="670"/>
    </location>
    <ligand>
        <name>Zn(2+)</name>
        <dbReference type="ChEBI" id="CHEBI:29105"/>
    </ligand>
</feature>
<comment type="function">
    <text evidence="1">Catalyzes the attachment of alanine to tRNA(Ala) in a two-step reaction: alanine is first activated by ATP to form Ala-AMP and then transferred to the acceptor end of tRNA(Ala). Also edits incorrectly charged Ser-tRNA(Ala) and Gly-tRNA(Ala) via its editing domain (By similarity).</text>
</comment>
<comment type="catalytic activity">
    <reaction>
        <text>tRNA(Ala) + L-alanine + ATP = L-alanyl-tRNA(Ala) + AMP + diphosphate</text>
        <dbReference type="Rhea" id="RHEA:12540"/>
        <dbReference type="Rhea" id="RHEA-COMP:9657"/>
        <dbReference type="Rhea" id="RHEA-COMP:9923"/>
        <dbReference type="ChEBI" id="CHEBI:30616"/>
        <dbReference type="ChEBI" id="CHEBI:33019"/>
        <dbReference type="ChEBI" id="CHEBI:57972"/>
        <dbReference type="ChEBI" id="CHEBI:78442"/>
        <dbReference type="ChEBI" id="CHEBI:78497"/>
        <dbReference type="ChEBI" id="CHEBI:456215"/>
        <dbReference type="EC" id="6.1.1.7"/>
    </reaction>
</comment>
<comment type="cofactor">
    <cofactor evidence="1">
        <name>Zn(2+)</name>
        <dbReference type="ChEBI" id="CHEBI:29105"/>
    </cofactor>
    <text evidence="1">Binds 1 zinc ion per subunit.</text>
</comment>
<comment type="subunit">
    <text evidence="1">Homotetramer.</text>
</comment>
<comment type="subcellular location">
    <subcellularLocation>
        <location evidence="1">Cytoplasm</location>
    </subcellularLocation>
</comment>
<comment type="domain">
    <text evidence="1">Consists of two domains; the N-terminal catalytic domain and the editing domain; the C-terminal C-Ala domain is replaced by an unrelated sequence in this strain. The editing domain removes incorrectly charged amino acids (By similarity).</text>
</comment>
<comment type="similarity">
    <text evidence="3">Belongs to the class-II aminoacyl-tRNA synthetase family.</text>
</comment>
<evidence type="ECO:0000250" key="1"/>
<evidence type="ECO:0000255" key="2"/>
<evidence type="ECO:0000305" key="3"/>
<name>SYA_YERPA</name>
<gene>
    <name type="primary">alaS</name>
    <name type="ordered locus">YPA_2840</name>
</gene>
<accession>Q1C420</accession>
<keyword id="KW-0030">Aminoacyl-tRNA synthetase</keyword>
<keyword id="KW-0067">ATP-binding</keyword>
<keyword id="KW-0963">Cytoplasm</keyword>
<keyword id="KW-0436">Ligase</keyword>
<keyword id="KW-0479">Metal-binding</keyword>
<keyword id="KW-0547">Nucleotide-binding</keyword>
<keyword id="KW-0648">Protein biosynthesis</keyword>
<keyword id="KW-0694">RNA-binding</keyword>
<keyword id="KW-0820">tRNA-binding</keyword>
<keyword id="KW-0862">Zinc</keyword>
<organism>
    <name type="scientific">Yersinia pestis bv. Antiqua (strain Antiqua)</name>
    <dbReference type="NCBI Taxonomy" id="360102"/>
    <lineage>
        <taxon>Bacteria</taxon>
        <taxon>Pseudomonadati</taxon>
        <taxon>Pseudomonadota</taxon>
        <taxon>Gammaproteobacteria</taxon>
        <taxon>Enterobacterales</taxon>
        <taxon>Yersiniaceae</taxon>
        <taxon>Yersinia</taxon>
    </lineage>
</organism>
<sequence length="738" mass="82064">MSKSTAEIRQAFLDFFHSKGHQVVSSSTLVPNNDPTLLFTNAGMNQFKDVFLGLDKRAYSRATTSQRCVRAGGKHNDLENVGYTARHHTFFEMLGNFSFGDYFKHDAINFAWELLTSEQWFNLPKEKLWVTVYETDDEAYNIWANEVGVPHERIIRIGDNKGGAFASDNFWQMGDTGPCGPCSEIFFDHGDHIWGGPPGSAEEDGDRYIEIWNIVFMQFNRQSDGTMLPLPKPSVDTGMGLERIAAVLQHVNSNYEIDLFRDLIAAVADVTGATDLSSKSLRVIADHIRSCAFLISDGVIPSNENRGYVLRRIIRRAIRHGNMLGAKETFFYKLVAPLIAVMGPAAAELKQQQAMVEQVLKTEEEQFARTLERGLALLDDELSKLTGDTLDGETAFRLYDTYGFPVDLTADVCRERNLKVDEAGFEQAMEAQRRRARESSGFGADYNSLIRVDSASQFSGYDHVQQHATVTALFRNGEAVDEIHAGEEAVVVLNRTPFYGESGGQVGDKGELKNATATFSVTDTQKYGQAIGHVGILTTGTLRVNHSVEALVDVVRRNRIRLNHSATHLLHAALRNVLGEHVAQKGSLVNDKYLRFDFSHFEAMKPEQIRLVEDLVNEQIRRNMPVQTEVMELDAAKEKGAMALFGEKYDDQVRVLTMGDFSTELCGGTHASRTGDIGLFRILTESGSNLPGCTILRNLAIAGFSAFGSRKLSKRASEPSGRKFEPSVARQRCFSNGP</sequence>
<dbReference type="EC" id="6.1.1.7"/>
<dbReference type="EMBL" id="CP000308">
    <property type="protein sequence ID" value="ABG14802.1"/>
    <property type="molecule type" value="Genomic_DNA"/>
</dbReference>
<dbReference type="SMR" id="Q1C420"/>
<dbReference type="KEGG" id="ypa:YPA_2840"/>
<dbReference type="Proteomes" id="UP000001971">
    <property type="component" value="Chromosome"/>
</dbReference>
<dbReference type="GO" id="GO:0005829">
    <property type="term" value="C:cytosol"/>
    <property type="evidence" value="ECO:0007669"/>
    <property type="project" value="TreeGrafter"/>
</dbReference>
<dbReference type="GO" id="GO:0004813">
    <property type="term" value="F:alanine-tRNA ligase activity"/>
    <property type="evidence" value="ECO:0007669"/>
    <property type="project" value="UniProtKB-UniRule"/>
</dbReference>
<dbReference type="GO" id="GO:0002161">
    <property type="term" value="F:aminoacyl-tRNA deacylase activity"/>
    <property type="evidence" value="ECO:0007669"/>
    <property type="project" value="TreeGrafter"/>
</dbReference>
<dbReference type="GO" id="GO:0005524">
    <property type="term" value="F:ATP binding"/>
    <property type="evidence" value="ECO:0007669"/>
    <property type="project" value="UniProtKB-UniRule"/>
</dbReference>
<dbReference type="GO" id="GO:0000049">
    <property type="term" value="F:tRNA binding"/>
    <property type="evidence" value="ECO:0007669"/>
    <property type="project" value="UniProtKB-KW"/>
</dbReference>
<dbReference type="GO" id="GO:0008270">
    <property type="term" value="F:zinc ion binding"/>
    <property type="evidence" value="ECO:0007669"/>
    <property type="project" value="UniProtKB-UniRule"/>
</dbReference>
<dbReference type="GO" id="GO:0006419">
    <property type="term" value="P:alanyl-tRNA aminoacylation"/>
    <property type="evidence" value="ECO:0007669"/>
    <property type="project" value="UniProtKB-UniRule"/>
</dbReference>
<dbReference type="GO" id="GO:0045892">
    <property type="term" value="P:negative regulation of DNA-templated transcription"/>
    <property type="evidence" value="ECO:0007669"/>
    <property type="project" value="TreeGrafter"/>
</dbReference>
<dbReference type="CDD" id="cd00673">
    <property type="entry name" value="AlaRS_core"/>
    <property type="match status" value="1"/>
</dbReference>
<dbReference type="FunFam" id="2.40.30.130:FF:000001">
    <property type="entry name" value="Alanine--tRNA ligase"/>
    <property type="match status" value="1"/>
</dbReference>
<dbReference type="FunFam" id="3.30.54.20:FF:000001">
    <property type="entry name" value="Alanine--tRNA ligase"/>
    <property type="match status" value="1"/>
</dbReference>
<dbReference type="FunFam" id="3.30.930.10:FF:000004">
    <property type="entry name" value="Alanine--tRNA ligase"/>
    <property type="match status" value="1"/>
</dbReference>
<dbReference type="FunFam" id="3.30.980.10:FF:000004">
    <property type="entry name" value="Alanine--tRNA ligase, cytoplasmic"/>
    <property type="match status" value="1"/>
</dbReference>
<dbReference type="Gene3D" id="2.40.30.130">
    <property type="match status" value="1"/>
</dbReference>
<dbReference type="Gene3D" id="3.30.54.20">
    <property type="match status" value="1"/>
</dbReference>
<dbReference type="Gene3D" id="3.30.930.10">
    <property type="entry name" value="Bira Bifunctional Protein, Domain 2"/>
    <property type="match status" value="1"/>
</dbReference>
<dbReference type="Gene3D" id="3.30.980.10">
    <property type="entry name" value="Threonyl-trna Synthetase, Chain A, domain 2"/>
    <property type="match status" value="1"/>
</dbReference>
<dbReference type="HAMAP" id="MF_00036_B">
    <property type="entry name" value="Ala_tRNA_synth_B"/>
    <property type="match status" value="1"/>
</dbReference>
<dbReference type="InterPro" id="IPR045864">
    <property type="entry name" value="aa-tRNA-synth_II/BPL/LPL"/>
</dbReference>
<dbReference type="InterPro" id="IPR002318">
    <property type="entry name" value="Ala-tRNA-lgiase_IIc"/>
</dbReference>
<dbReference type="InterPro" id="IPR018162">
    <property type="entry name" value="Ala-tRNA-ligase_IIc_anticod-bd"/>
</dbReference>
<dbReference type="InterPro" id="IPR018165">
    <property type="entry name" value="Ala-tRNA-synth_IIc_core"/>
</dbReference>
<dbReference type="InterPro" id="IPR018164">
    <property type="entry name" value="Ala-tRNA-synth_IIc_N"/>
</dbReference>
<dbReference type="InterPro" id="IPR050058">
    <property type="entry name" value="Ala-tRNA_ligase"/>
</dbReference>
<dbReference type="InterPro" id="IPR023033">
    <property type="entry name" value="Ala_tRNA_ligase_euk/bac"/>
</dbReference>
<dbReference type="InterPro" id="IPR018163">
    <property type="entry name" value="Thr/Ala-tRNA-synth_IIc_edit"/>
</dbReference>
<dbReference type="InterPro" id="IPR009000">
    <property type="entry name" value="Transl_B-barrel_sf"/>
</dbReference>
<dbReference type="InterPro" id="IPR012947">
    <property type="entry name" value="tRNA_SAD"/>
</dbReference>
<dbReference type="NCBIfam" id="TIGR00344">
    <property type="entry name" value="alaS"/>
    <property type="match status" value="1"/>
</dbReference>
<dbReference type="PANTHER" id="PTHR11777:SF9">
    <property type="entry name" value="ALANINE--TRNA LIGASE, CYTOPLASMIC"/>
    <property type="match status" value="1"/>
</dbReference>
<dbReference type="PANTHER" id="PTHR11777">
    <property type="entry name" value="ALANYL-TRNA SYNTHETASE"/>
    <property type="match status" value="1"/>
</dbReference>
<dbReference type="Pfam" id="PF01411">
    <property type="entry name" value="tRNA-synt_2c"/>
    <property type="match status" value="1"/>
</dbReference>
<dbReference type="Pfam" id="PF07973">
    <property type="entry name" value="tRNA_SAD"/>
    <property type="match status" value="1"/>
</dbReference>
<dbReference type="PRINTS" id="PR00980">
    <property type="entry name" value="TRNASYNTHALA"/>
</dbReference>
<dbReference type="SMART" id="SM00863">
    <property type="entry name" value="tRNA_SAD"/>
    <property type="match status" value="1"/>
</dbReference>
<dbReference type="SUPFAM" id="SSF55681">
    <property type="entry name" value="Class II aaRS and biotin synthetases"/>
    <property type="match status" value="1"/>
</dbReference>
<dbReference type="SUPFAM" id="SSF101353">
    <property type="entry name" value="Putative anticodon-binding domain of alanyl-tRNA synthetase (AlaRS)"/>
    <property type="match status" value="1"/>
</dbReference>
<dbReference type="SUPFAM" id="SSF55186">
    <property type="entry name" value="ThrRS/AlaRS common domain"/>
    <property type="match status" value="1"/>
</dbReference>
<dbReference type="SUPFAM" id="SSF50447">
    <property type="entry name" value="Translation proteins"/>
    <property type="match status" value="1"/>
</dbReference>
<dbReference type="PROSITE" id="PS50860">
    <property type="entry name" value="AA_TRNA_LIGASE_II_ALA"/>
    <property type="match status" value="1"/>
</dbReference>
<proteinExistence type="inferred from homology"/>
<reference key="1">
    <citation type="journal article" date="2006" name="J. Bacteriol.">
        <title>Complete genome sequence of Yersinia pestis strains Antiqua and Nepal516: evidence of gene reduction in an emerging pathogen.</title>
        <authorList>
            <person name="Chain P.S.G."/>
            <person name="Hu P."/>
            <person name="Malfatti S.A."/>
            <person name="Radnedge L."/>
            <person name="Larimer F."/>
            <person name="Vergez L.M."/>
            <person name="Worsham P."/>
            <person name="Chu M.C."/>
            <person name="Andersen G.L."/>
        </authorList>
    </citation>
    <scope>NUCLEOTIDE SEQUENCE [LARGE SCALE GENOMIC DNA]</scope>
    <source>
        <strain>Antiqua</strain>
    </source>
</reference>
<protein>
    <recommendedName>
        <fullName>Alanine--tRNA ligase</fullName>
        <ecNumber>6.1.1.7</ecNumber>
    </recommendedName>
    <alternativeName>
        <fullName>Alanyl-tRNA synthetase</fullName>
        <shortName>AlaRS</shortName>
    </alternativeName>
</protein>